<accession>P71037</accession>
<accession>Q794Z8</accession>
<proteinExistence type="predicted"/>
<name>YWNB_BACSU</name>
<evidence type="ECO:0000305" key="1"/>
<protein>
    <recommendedName>
        <fullName>Uncharacterized protein YwnB</fullName>
    </recommendedName>
</protein>
<dbReference type="EMBL" id="Y08559">
    <property type="protein sequence ID" value="CAA69861.1"/>
    <property type="molecule type" value="Genomic_DNA"/>
</dbReference>
<dbReference type="EMBL" id="AL009126">
    <property type="protein sequence ID" value="CAB15679.1"/>
    <property type="molecule type" value="Genomic_DNA"/>
</dbReference>
<dbReference type="PIR" id="E70063">
    <property type="entry name" value="E70063"/>
</dbReference>
<dbReference type="RefSeq" id="NP_391543.1">
    <property type="nucleotide sequence ID" value="NC_000964.3"/>
</dbReference>
<dbReference type="RefSeq" id="WP_003227736.1">
    <property type="nucleotide sequence ID" value="NZ_OZ025638.1"/>
</dbReference>
<dbReference type="SMR" id="P71037"/>
<dbReference type="FunCoup" id="P71037">
    <property type="interactions" value="183"/>
</dbReference>
<dbReference type="STRING" id="224308.BSU36620"/>
<dbReference type="PaxDb" id="224308-BSU36620"/>
<dbReference type="EnsemblBacteria" id="CAB15679">
    <property type="protein sequence ID" value="CAB15679"/>
    <property type="gene ID" value="BSU_36620"/>
</dbReference>
<dbReference type="GeneID" id="936961"/>
<dbReference type="KEGG" id="bsu:BSU36620"/>
<dbReference type="PATRIC" id="fig|224308.179.peg.3963"/>
<dbReference type="eggNOG" id="COG2910">
    <property type="taxonomic scope" value="Bacteria"/>
</dbReference>
<dbReference type="InParanoid" id="P71037"/>
<dbReference type="OrthoDB" id="9785372at2"/>
<dbReference type="PhylomeDB" id="P71037"/>
<dbReference type="BioCyc" id="BSUB:BSU36620-MONOMER"/>
<dbReference type="Proteomes" id="UP000001570">
    <property type="component" value="Chromosome"/>
</dbReference>
<dbReference type="GO" id="GO:0016646">
    <property type="term" value="F:oxidoreductase activity, acting on the CH-NH group of donors, NAD or NADP as acceptor"/>
    <property type="evidence" value="ECO:0000318"/>
    <property type="project" value="GO_Central"/>
</dbReference>
<dbReference type="CDD" id="cd05244">
    <property type="entry name" value="BVR-B_like_SDR_a"/>
    <property type="match status" value="1"/>
</dbReference>
<dbReference type="Gene3D" id="3.40.50.720">
    <property type="entry name" value="NAD(P)-binding Rossmann-like Domain"/>
    <property type="match status" value="1"/>
</dbReference>
<dbReference type="InterPro" id="IPR016040">
    <property type="entry name" value="NAD(P)-bd_dom"/>
</dbReference>
<dbReference type="InterPro" id="IPR036291">
    <property type="entry name" value="NAD(P)-bd_dom_sf"/>
</dbReference>
<dbReference type="InterPro" id="IPR051606">
    <property type="entry name" value="Polyketide_Oxido-like"/>
</dbReference>
<dbReference type="PANTHER" id="PTHR43355">
    <property type="entry name" value="FLAVIN REDUCTASE (NADPH)"/>
    <property type="match status" value="1"/>
</dbReference>
<dbReference type="PANTHER" id="PTHR43355:SF2">
    <property type="entry name" value="FLAVIN REDUCTASE (NADPH)"/>
    <property type="match status" value="1"/>
</dbReference>
<dbReference type="Pfam" id="PF13460">
    <property type="entry name" value="NAD_binding_10"/>
    <property type="match status" value="1"/>
</dbReference>
<dbReference type="SUPFAM" id="SSF51735">
    <property type="entry name" value="NAD(P)-binding Rossmann-fold domains"/>
    <property type="match status" value="1"/>
</dbReference>
<organism>
    <name type="scientific">Bacillus subtilis (strain 168)</name>
    <dbReference type="NCBI Taxonomy" id="224308"/>
    <lineage>
        <taxon>Bacteria</taxon>
        <taxon>Bacillati</taxon>
        <taxon>Bacillota</taxon>
        <taxon>Bacilli</taxon>
        <taxon>Bacillales</taxon>
        <taxon>Bacillaceae</taxon>
        <taxon>Bacillus</taxon>
    </lineage>
</organism>
<gene>
    <name type="primary">ywnB</name>
    <name type="ordered locus">BSU36620</name>
</gene>
<keyword id="KW-1185">Reference proteome</keyword>
<feature type="chain" id="PRO_0000360191" description="Uncharacterized protein YwnB">
    <location>
        <begin position="1"/>
        <end position="213"/>
    </location>
</feature>
<reference key="1">
    <citation type="journal article" date="1997" name="J. Bacteriol.">
        <title>The Bacillus subtilis ureABC operon.</title>
        <authorList>
            <person name="Cruz-Ramos H."/>
            <person name="Glaser P."/>
            <person name="Wray L.V. Jr."/>
            <person name="Fisher S.H."/>
        </authorList>
    </citation>
    <scope>NUCLEOTIDE SEQUENCE [GENOMIC DNA]</scope>
    <source>
        <strain>168</strain>
    </source>
</reference>
<reference key="2">
    <citation type="journal article" date="1997" name="Nature">
        <title>The complete genome sequence of the Gram-positive bacterium Bacillus subtilis.</title>
        <authorList>
            <person name="Kunst F."/>
            <person name="Ogasawara N."/>
            <person name="Moszer I."/>
            <person name="Albertini A.M."/>
            <person name="Alloni G."/>
            <person name="Azevedo V."/>
            <person name="Bertero M.G."/>
            <person name="Bessieres P."/>
            <person name="Bolotin A."/>
            <person name="Borchert S."/>
            <person name="Borriss R."/>
            <person name="Boursier L."/>
            <person name="Brans A."/>
            <person name="Braun M."/>
            <person name="Brignell S.C."/>
            <person name="Bron S."/>
            <person name="Brouillet S."/>
            <person name="Bruschi C.V."/>
            <person name="Caldwell B."/>
            <person name="Capuano V."/>
            <person name="Carter N.M."/>
            <person name="Choi S.-K."/>
            <person name="Codani J.-J."/>
            <person name="Connerton I.F."/>
            <person name="Cummings N.J."/>
            <person name="Daniel R.A."/>
            <person name="Denizot F."/>
            <person name="Devine K.M."/>
            <person name="Duesterhoeft A."/>
            <person name="Ehrlich S.D."/>
            <person name="Emmerson P.T."/>
            <person name="Entian K.-D."/>
            <person name="Errington J."/>
            <person name="Fabret C."/>
            <person name="Ferrari E."/>
            <person name="Foulger D."/>
            <person name="Fritz C."/>
            <person name="Fujita M."/>
            <person name="Fujita Y."/>
            <person name="Fuma S."/>
            <person name="Galizzi A."/>
            <person name="Galleron N."/>
            <person name="Ghim S.-Y."/>
            <person name="Glaser P."/>
            <person name="Goffeau A."/>
            <person name="Golightly E.J."/>
            <person name="Grandi G."/>
            <person name="Guiseppi G."/>
            <person name="Guy B.J."/>
            <person name="Haga K."/>
            <person name="Haiech J."/>
            <person name="Harwood C.R."/>
            <person name="Henaut A."/>
            <person name="Hilbert H."/>
            <person name="Holsappel S."/>
            <person name="Hosono S."/>
            <person name="Hullo M.-F."/>
            <person name="Itaya M."/>
            <person name="Jones L.-M."/>
            <person name="Joris B."/>
            <person name="Karamata D."/>
            <person name="Kasahara Y."/>
            <person name="Klaerr-Blanchard M."/>
            <person name="Klein C."/>
            <person name="Kobayashi Y."/>
            <person name="Koetter P."/>
            <person name="Koningstein G."/>
            <person name="Krogh S."/>
            <person name="Kumano M."/>
            <person name="Kurita K."/>
            <person name="Lapidus A."/>
            <person name="Lardinois S."/>
            <person name="Lauber J."/>
            <person name="Lazarevic V."/>
            <person name="Lee S.-M."/>
            <person name="Levine A."/>
            <person name="Liu H."/>
            <person name="Masuda S."/>
            <person name="Mauel C."/>
            <person name="Medigue C."/>
            <person name="Medina N."/>
            <person name="Mellado R.P."/>
            <person name="Mizuno M."/>
            <person name="Moestl D."/>
            <person name="Nakai S."/>
            <person name="Noback M."/>
            <person name="Noone D."/>
            <person name="O'Reilly M."/>
            <person name="Ogawa K."/>
            <person name="Ogiwara A."/>
            <person name="Oudega B."/>
            <person name="Park S.-H."/>
            <person name="Parro V."/>
            <person name="Pohl T.M."/>
            <person name="Portetelle D."/>
            <person name="Porwollik S."/>
            <person name="Prescott A.M."/>
            <person name="Presecan E."/>
            <person name="Pujic P."/>
            <person name="Purnelle B."/>
            <person name="Rapoport G."/>
            <person name="Rey M."/>
            <person name="Reynolds S."/>
            <person name="Rieger M."/>
            <person name="Rivolta C."/>
            <person name="Rocha E."/>
            <person name="Roche B."/>
            <person name="Rose M."/>
            <person name="Sadaie Y."/>
            <person name="Sato T."/>
            <person name="Scanlan E."/>
            <person name="Schleich S."/>
            <person name="Schroeter R."/>
            <person name="Scoffone F."/>
            <person name="Sekiguchi J."/>
            <person name="Sekowska A."/>
            <person name="Seror S.J."/>
            <person name="Serror P."/>
            <person name="Shin B.-S."/>
            <person name="Soldo B."/>
            <person name="Sorokin A."/>
            <person name="Tacconi E."/>
            <person name="Takagi T."/>
            <person name="Takahashi H."/>
            <person name="Takemaru K."/>
            <person name="Takeuchi M."/>
            <person name="Tamakoshi A."/>
            <person name="Tanaka T."/>
            <person name="Terpstra P."/>
            <person name="Tognoni A."/>
            <person name="Tosato V."/>
            <person name="Uchiyama S."/>
            <person name="Vandenbol M."/>
            <person name="Vannier F."/>
            <person name="Vassarotti A."/>
            <person name="Viari A."/>
            <person name="Wambutt R."/>
            <person name="Wedler E."/>
            <person name="Wedler H."/>
            <person name="Weitzenegger T."/>
            <person name="Winters P."/>
            <person name="Wipat A."/>
            <person name="Yamamoto H."/>
            <person name="Yamane K."/>
            <person name="Yasumoto K."/>
            <person name="Yata K."/>
            <person name="Yoshida K."/>
            <person name="Yoshikawa H.-F."/>
            <person name="Zumstein E."/>
            <person name="Yoshikawa H."/>
            <person name="Danchin A."/>
        </authorList>
    </citation>
    <scope>NUCLEOTIDE SEQUENCE [LARGE SCALE GENOMIC DNA]</scope>
    <source>
        <strain>168</strain>
    </source>
</reference>
<comment type="caution">
    <text evidence="1">The N-terminus share sequence similarity with the dihydrodipicolinate reductase family. It however lacks the conserved C-terminal part, suggesting it has no dihydrodipicolinate reductase activity.</text>
</comment>
<sequence length="213" mass="23196">MKIGIIGASGKAGNEILKEAKKRGHEVTAIVRNASKVQEQDVAILEKDVFELTAEDIKPFDAVVNAFGAAPGQEHLHVEAGRALISILKDAKHTRLLVVGGAGSLFVDEAKTTRLMDTPEFPKEYLPTASNQGENLKDLQQTDSISWTFLSPAAFFDPAGKRTGSYQKGKDNVIVNAKGDSYISYADYAIAVLDELEHPEHKNERFTVVSEAE</sequence>